<accession>C5CGH5</accession>
<gene>
    <name evidence="1" type="primary">rpsD</name>
    <name type="ordered locus">Kole_1875</name>
</gene>
<reference key="1">
    <citation type="submission" date="2009-06" db="EMBL/GenBank/DDBJ databases">
        <title>Complete sequence of Thermotogales bacterium TBF 19.5.1.</title>
        <authorList>
            <consortium name="US DOE Joint Genome Institute"/>
            <person name="Lucas S."/>
            <person name="Copeland A."/>
            <person name="Lapidus A."/>
            <person name="Glavina del Rio T."/>
            <person name="Tice H."/>
            <person name="Bruce D."/>
            <person name="Goodwin L."/>
            <person name="Pitluck S."/>
            <person name="Chertkov O."/>
            <person name="Brettin T."/>
            <person name="Detter J.C."/>
            <person name="Han C."/>
            <person name="Schmutz J."/>
            <person name="Larimer F."/>
            <person name="Land M."/>
            <person name="Hauser L."/>
            <person name="Kyrpides N."/>
            <person name="Ovchinnikova G."/>
            <person name="Noll K."/>
        </authorList>
    </citation>
    <scope>NUCLEOTIDE SEQUENCE [LARGE SCALE GENOMIC DNA]</scope>
    <source>
        <strain>ATCC BAA-1733 / DSM 21960 / TBF 19.5.1</strain>
    </source>
</reference>
<feature type="chain" id="PRO_1000214294" description="Small ribosomal subunit protein uS4">
    <location>
        <begin position="1"/>
        <end position="208"/>
    </location>
</feature>
<feature type="domain" description="S4 RNA-binding" evidence="1">
    <location>
        <begin position="98"/>
        <end position="166"/>
    </location>
</feature>
<dbReference type="EMBL" id="CP001634">
    <property type="protein sequence ID" value="ACR80556.1"/>
    <property type="molecule type" value="Genomic_DNA"/>
</dbReference>
<dbReference type="RefSeq" id="WP_015869199.1">
    <property type="nucleotide sequence ID" value="NC_012785.1"/>
</dbReference>
<dbReference type="SMR" id="C5CGH5"/>
<dbReference type="STRING" id="521045.Kole_1875"/>
<dbReference type="KEGG" id="kol:Kole_1875"/>
<dbReference type="eggNOG" id="COG0522">
    <property type="taxonomic scope" value="Bacteria"/>
</dbReference>
<dbReference type="HOGENOM" id="CLU_092403_0_2_0"/>
<dbReference type="OrthoDB" id="9803672at2"/>
<dbReference type="Proteomes" id="UP000002382">
    <property type="component" value="Chromosome"/>
</dbReference>
<dbReference type="GO" id="GO:0015935">
    <property type="term" value="C:small ribosomal subunit"/>
    <property type="evidence" value="ECO:0007669"/>
    <property type="project" value="InterPro"/>
</dbReference>
<dbReference type="GO" id="GO:0019843">
    <property type="term" value="F:rRNA binding"/>
    <property type="evidence" value="ECO:0007669"/>
    <property type="project" value="UniProtKB-UniRule"/>
</dbReference>
<dbReference type="GO" id="GO:0003735">
    <property type="term" value="F:structural constituent of ribosome"/>
    <property type="evidence" value="ECO:0007669"/>
    <property type="project" value="InterPro"/>
</dbReference>
<dbReference type="GO" id="GO:0042274">
    <property type="term" value="P:ribosomal small subunit biogenesis"/>
    <property type="evidence" value="ECO:0007669"/>
    <property type="project" value="TreeGrafter"/>
</dbReference>
<dbReference type="GO" id="GO:0006412">
    <property type="term" value="P:translation"/>
    <property type="evidence" value="ECO:0007669"/>
    <property type="project" value="UniProtKB-UniRule"/>
</dbReference>
<dbReference type="CDD" id="cd00165">
    <property type="entry name" value="S4"/>
    <property type="match status" value="1"/>
</dbReference>
<dbReference type="FunFam" id="1.10.1050.10:FF:000001">
    <property type="entry name" value="30S ribosomal protein S4"/>
    <property type="match status" value="1"/>
</dbReference>
<dbReference type="FunFam" id="3.10.290.10:FF:000001">
    <property type="entry name" value="30S ribosomal protein S4"/>
    <property type="match status" value="1"/>
</dbReference>
<dbReference type="Gene3D" id="1.10.1050.10">
    <property type="entry name" value="Ribosomal Protein S4 Delta 41, Chain A, domain 1"/>
    <property type="match status" value="1"/>
</dbReference>
<dbReference type="Gene3D" id="3.10.290.10">
    <property type="entry name" value="RNA-binding S4 domain"/>
    <property type="match status" value="1"/>
</dbReference>
<dbReference type="HAMAP" id="MF_01306_B">
    <property type="entry name" value="Ribosomal_uS4_B"/>
    <property type="match status" value="1"/>
</dbReference>
<dbReference type="InterPro" id="IPR022801">
    <property type="entry name" value="Ribosomal_uS4"/>
</dbReference>
<dbReference type="InterPro" id="IPR005709">
    <property type="entry name" value="Ribosomal_uS4_bac-type"/>
</dbReference>
<dbReference type="InterPro" id="IPR018079">
    <property type="entry name" value="Ribosomal_uS4_CS"/>
</dbReference>
<dbReference type="InterPro" id="IPR001912">
    <property type="entry name" value="Ribosomal_uS4_N"/>
</dbReference>
<dbReference type="InterPro" id="IPR002942">
    <property type="entry name" value="S4_RNA-bd"/>
</dbReference>
<dbReference type="InterPro" id="IPR036986">
    <property type="entry name" value="S4_RNA-bd_sf"/>
</dbReference>
<dbReference type="NCBIfam" id="NF003717">
    <property type="entry name" value="PRK05327.1"/>
    <property type="match status" value="1"/>
</dbReference>
<dbReference type="NCBIfam" id="TIGR01017">
    <property type="entry name" value="rpsD_bact"/>
    <property type="match status" value="1"/>
</dbReference>
<dbReference type="PANTHER" id="PTHR11831">
    <property type="entry name" value="30S 40S RIBOSOMAL PROTEIN"/>
    <property type="match status" value="1"/>
</dbReference>
<dbReference type="PANTHER" id="PTHR11831:SF4">
    <property type="entry name" value="SMALL RIBOSOMAL SUBUNIT PROTEIN US4M"/>
    <property type="match status" value="1"/>
</dbReference>
<dbReference type="Pfam" id="PF00163">
    <property type="entry name" value="Ribosomal_S4"/>
    <property type="match status" value="1"/>
</dbReference>
<dbReference type="Pfam" id="PF01479">
    <property type="entry name" value="S4"/>
    <property type="match status" value="1"/>
</dbReference>
<dbReference type="SMART" id="SM01390">
    <property type="entry name" value="Ribosomal_S4"/>
    <property type="match status" value="1"/>
</dbReference>
<dbReference type="SMART" id="SM00363">
    <property type="entry name" value="S4"/>
    <property type="match status" value="1"/>
</dbReference>
<dbReference type="SUPFAM" id="SSF55174">
    <property type="entry name" value="Alpha-L RNA-binding motif"/>
    <property type="match status" value="1"/>
</dbReference>
<dbReference type="PROSITE" id="PS00632">
    <property type="entry name" value="RIBOSOMAL_S4"/>
    <property type="match status" value="1"/>
</dbReference>
<dbReference type="PROSITE" id="PS50889">
    <property type="entry name" value="S4"/>
    <property type="match status" value="1"/>
</dbReference>
<name>RS4_KOSOT</name>
<comment type="function">
    <text evidence="1">One of the primary rRNA binding proteins, it binds directly to 16S rRNA where it nucleates assembly of the body of the 30S subunit.</text>
</comment>
<comment type="function">
    <text evidence="1">With S5 and S12 plays an important role in translational accuracy.</text>
</comment>
<comment type="subunit">
    <text evidence="1">Part of the 30S ribosomal subunit. Contacts protein S5. The interaction surface between S4 and S5 is involved in control of translational fidelity.</text>
</comment>
<comment type="similarity">
    <text evidence="1">Belongs to the universal ribosomal protein uS4 family.</text>
</comment>
<proteinExistence type="inferred from homology"/>
<protein>
    <recommendedName>
        <fullName evidence="1">Small ribosomal subunit protein uS4</fullName>
    </recommendedName>
    <alternativeName>
        <fullName evidence="2">30S ribosomal protein S4</fullName>
    </alternativeName>
</protein>
<organism>
    <name type="scientific">Kosmotoga olearia (strain ATCC BAA-1733 / DSM 21960 / TBF 19.5.1)</name>
    <dbReference type="NCBI Taxonomy" id="521045"/>
    <lineage>
        <taxon>Bacteria</taxon>
        <taxon>Thermotogati</taxon>
        <taxon>Thermotogota</taxon>
        <taxon>Thermotogae</taxon>
        <taxon>Kosmotogales</taxon>
        <taxon>Kosmotogaceae</taxon>
        <taxon>Kosmotoga</taxon>
    </lineage>
</organism>
<keyword id="KW-1185">Reference proteome</keyword>
<keyword id="KW-0687">Ribonucleoprotein</keyword>
<keyword id="KW-0689">Ribosomal protein</keyword>
<keyword id="KW-0694">RNA-binding</keyword>
<keyword id="KW-0699">rRNA-binding</keyword>
<sequence>MARYTGPVCKLCRREGFKLYLKGERCFTPKCAVVKRPFAPGQHGSATRKLTQYGMQLRSKQALKRMYGVLEKQFRRYFEIASRKSEETGTALIKVLESRLDNVVYRMGFASSRKQARQLVSHGHVLVNGRKVNKASYSVRPGDIIEIKEKSKAKVPVKEAIEASRNRTTPPWLEIDFDAARGTFVRFPEREEVDIPVDLQSIIELYSK</sequence>
<evidence type="ECO:0000255" key="1">
    <source>
        <dbReference type="HAMAP-Rule" id="MF_01306"/>
    </source>
</evidence>
<evidence type="ECO:0000305" key="2"/>